<keyword id="KW-0479">Metal-binding</keyword>
<keyword id="KW-0480">Metal-thiolate cluster</keyword>
<keyword id="KW-0862">Zinc</keyword>
<feature type="chain" id="PRO_0000197281" description="Metallothionein A">
    <location>
        <begin position="1"/>
        <end position="60"/>
    </location>
</feature>
<feature type="region of interest" description="Beta">
    <location>
        <begin position="1"/>
        <end position="28"/>
    </location>
</feature>
<feature type="region of interest" description="Alpha">
    <location>
        <begin position="29"/>
        <end position="60"/>
    </location>
</feature>
<feature type="binding site" evidence="2">
    <location>
        <position position="4"/>
    </location>
    <ligand>
        <name>a divalent metal cation</name>
        <dbReference type="ChEBI" id="CHEBI:60240"/>
        <label>1</label>
        <note>in cluster B</note>
    </ligand>
</feature>
<feature type="binding site" evidence="2">
    <location>
        <position position="6"/>
    </location>
    <ligand>
        <name>a divalent metal cation</name>
        <dbReference type="ChEBI" id="CHEBI:60240"/>
        <label>1</label>
        <note>in cluster B</note>
    </ligand>
</feature>
<feature type="binding site" evidence="2">
    <location>
        <position position="6"/>
    </location>
    <ligand>
        <name>a divalent metal cation</name>
        <dbReference type="ChEBI" id="CHEBI:60240"/>
        <label>2</label>
        <note>in cluster B</note>
    </ligand>
</feature>
<feature type="binding site" evidence="2">
    <location>
        <position position="12"/>
    </location>
    <ligand>
        <name>a divalent metal cation</name>
        <dbReference type="ChEBI" id="CHEBI:60240"/>
        <label>2</label>
        <note>in cluster B</note>
    </ligand>
</feature>
<feature type="binding site" evidence="2">
    <location>
        <position position="14"/>
    </location>
    <ligand>
        <name>a divalent metal cation</name>
        <dbReference type="ChEBI" id="CHEBI:60240"/>
        <label>2</label>
        <note>in cluster B</note>
    </ligand>
</feature>
<feature type="binding site" evidence="2">
    <location>
        <position position="14"/>
    </location>
    <ligand>
        <name>a divalent metal cation</name>
        <dbReference type="ChEBI" id="CHEBI:60240"/>
        <label>3</label>
        <note>in cluster B</note>
    </ligand>
</feature>
<feature type="binding site" evidence="2">
    <location>
        <position position="18"/>
    </location>
    <ligand>
        <name>a divalent metal cation</name>
        <dbReference type="ChEBI" id="CHEBI:60240"/>
        <label>3</label>
        <note>in cluster B</note>
    </ligand>
</feature>
<feature type="binding site" evidence="2">
    <location>
        <position position="20"/>
    </location>
    <ligand>
        <name>a divalent metal cation</name>
        <dbReference type="ChEBI" id="CHEBI:60240"/>
        <label>1</label>
        <note>in cluster B</note>
    </ligand>
</feature>
<feature type="binding site" evidence="2">
    <location>
        <position position="23"/>
    </location>
    <ligand>
        <name>a divalent metal cation</name>
        <dbReference type="ChEBI" id="CHEBI:60240"/>
        <label>1</label>
        <note>in cluster B</note>
    </ligand>
</feature>
<feature type="binding site" evidence="2">
    <location>
        <position position="23"/>
    </location>
    <ligand>
        <name>a divalent metal cation</name>
        <dbReference type="ChEBI" id="CHEBI:60240"/>
        <label>3</label>
        <note>in cluster B</note>
    </ligand>
</feature>
<feature type="binding site" evidence="2">
    <location>
        <position position="25"/>
    </location>
    <ligand>
        <name>a divalent metal cation</name>
        <dbReference type="ChEBI" id="CHEBI:60240"/>
        <label>2</label>
        <note>in cluster B</note>
    </ligand>
</feature>
<feature type="binding site" evidence="2">
    <location>
        <position position="28"/>
    </location>
    <ligand>
        <name>a divalent metal cation</name>
        <dbReference type="ChEBI" id="CHEBI:60240"/>
        <label>3</label>
        <note>in cluster B</note>
    </ligand>
</feature>
<feature type="binding site" evidence="2">
    <location>
        <position position="32"/>
    </location>
    <ligand>
        <name>a divalent metal cation</name>
        <dbReference type="ChEBI" id="CHEBI:60240"/>
        <label>4</label>
        <note>in cluster A</note>
    </ligand>
</feature>
<feature type="binding site" evidence="2">
    <location>
        <position position="33"/>
    </location>
    <ligand>
        <name>a divalent metal cation</name>
        <dbReference type="ChEBI" id="CHEBI:60240"/>
        <label>4</label>
        <note>in cluster A</note>
    </ligand>
</feature>
<feature type="binding site" evidence="2">
    <location>
        <position position="33"/>
    </location>
    <ligand>
        <name>a divalent metal cation</name>
        <dbReference type="ChEBI" id="CHEBI:60240"/>
        <label>5</label>
        <note>in cluster A</note>
    </ligand>
</feature>
<feature type="binding site" evidence="2">
    <location>
        <position position="35"/>
    </location>
    <ligand>
        <name>a divalent metal cation</name>
        <dbReference type="ChEBI" id="CHEBI:60240"/>
        <label>5</label>
        <note>in cluster A</note>
    </ligand>
</feature>
<feature type="binding site" evidence="2">
    <location>
        <position position="36"/>
    </location>
    <ligand>
        <name>a divalent metal cation</name>
        <dbReference type="ChEBI" id="CHEBI:60240"/>
        <label>5</label>
        <note>in cluster A</note>
    </ligand>
</feature>
<feature type="binding site" evidence="2">
    <location>
        <position position="36"/>
    </location>
    <ligand>
        <name>a divalent metal cation</name>
        <dbReference type="ChEBI" id="CHEBI:60240"/>
        <label>6</label>
        <note>in cluster A</note>
    </ligand>
</feature>
<feature type="binding site" evidence="2">
    <location>
        <position position="40"/>
    </location>
    <ligand>
        <name>a divalent metal cation</name>
        <dbReference type="ChEBI" id="CHEBI:60240"/>
        <label>6</label>
        <note>in cluster A</note>
    </ligand>
</feature>
<feature type="binding site" evidence="2">
    <location>
        <position position="43"/>
    </location>
    <ligand>
        <name>a divalent metal cation</name>
        <dbReference type="ChEBI" id="CHEBI:60240"/>
        <label>4</label>
        <note>in cluster A</note>
    </ligand>
</feature>
<feature type="binding site" evidence="2">
    <location>
        <position position="43"/>
    </location>
    <ligand>
        <name>a divalent metal cation</name>
        <dbReference type="ChEBI" id="CHEBI:60240"/>
        <label>6</label>
        <note>in cluster A</note>
    </ligand>
</feature>
<feature type="binding site" evidence="2">
    <location>
        <position position="47"/>
    </location>
    <ligand>
        <name>a divalent metal cation</name>
        <dbReference type="ChEBI" id="CHEBI:60240"/>
        <label>4</label>
        <note>in cluster A</note>
    </ligand>
</feature>
<feature type="binding site" evidence="2">
    <location>
        <position position="49"/>
    </location>
    <ligand>
        <name>a divalent metal cation</name>
        <dbReference type="ChEBI" id="CHEBI:60240"/>
        <label>5</label>
        <note>in cluster A</note>
    </ligand>
</feature>
<feature type="binding site" evidence="2">
    <location>
        <position position="49"/>
    </location>
    <ligand>
        <name>a divalent metal cation</name>
        <dbReference type="ChEBI" id="CHEBI:60240"/>
        <label>7</label>
        <note>in cluster A</note>
    </ligand>
</feature>
<feature type="binding site" evidence="3">
    <location>
        <position position="54"/>
    </location>
    <ligand>
        <name>a divalent metal cation</name>
        <dbReference type="ChEBI" id="CHEBI:60240"/>
        <label>7</label>
        <note>in cluster A</note>
    </ligand>
</feature>
<feature type="binding site" evidence="2">
    <location>
        <position position="58"/>
    </location>
    <ligand>
        <name>a divalent metal cation</name>
        <dbReference type="ChEBI" id="CHEBI:60240"/>
        <label>7</label>
        <note>in cluster A</note>
    </ligand>
</feature>
<feature type="binding site" evidence="2">
    <location>
        <position position="59"/>
    </location>
    <ligand>
        <name>a divalent metal cation</name>
        <dbReference type="ChEBI" id="CHEBI:60240"/>
        <label>6</label>
        <note>in cluster A</note>
    </ligand>
</feature>
<feature type="binding site" evidence="2">
    <location>
        <position position="59"/>
    </location>
    <ligand>
        <name>a divalent metal cation</name>
        <dbReference type="ChEBI" id="CHEBI:60240"/>
        <label>7</label>
        <note>in cluster A</note>
    </ligand>
</feature>
<evidence type="ECO:0000250" key="1"/>
<evidence type="ECO:0000250" key="2">
    <source>
        <dbReference type="UniProtKB" id="P02795"/>
    </source>
</evidence>
<evidence type="ECO:0000250" key="3">
    <source>
        <dbReference type="UniProtKB" id="P62339"/>
    </source>
</evidence>
<evidence type="ECO:0000305" key="4"/>
<name>MTA_CYPS1</name>
<organism>
    <name type="scientific">Cyprinodon sp.</name>
    <name type="common">Pupfish</name>
    <dbReference type="NCBI Taxonomy" id="48417"/>
    <lineage>
        <taxon>Eukaryota</taxon>
        <taxon>Metazoa</taxon>
        <taxon>Chordata</taxon>
        <taxon>Craniata</taxon>
        <taxon>Vertebrata</taxon>
        <taxon>Euteleostomi</taxon>
        <taxon>Actinopterygii</taxon>
        <taxon>Neopterygii</taxon>
        <taxon>Teleostei</taxon>
        <taxon>Neoteleostei</taxon>
        <taxon>Acanthomorphata</taxon>
        <taxon>Ovalentaria</taxon>
        <taxon>Atherinomorphae</taxon>
        <taxon>Cyprinodontiformes</taxon>
        <taxon>Cyprinodontidae</taxon>
        <taxon>Cyprinodon</taxon>
    </lineage>
</organism>
<protein>
    <recommendedName>
        <fullName>Metallothionein A</fullName>
        <shortName>MT A</shortName>
    </recommendedName>
</protein>
<comment type="function">
    <text evidence="1">Metallothioneins have a high content of cysteine residues that bind various heavy metals.</text>
</comment>
<comment type="domain">
    <text>Class I metallothioneins contain 2 metal-binding domains: four divalent ions are chelated within cluster A of the alpha domain and are coordinated via cysteinyl thiolate bridges to 11 cysteine ligands. Cluster B, the corresponding region within the beta domain, can ligate three divalent ions to 9 cysteines.</text>
</comment>
<comment type="similarity">
    <text evidence="4">Belongs to the metallothionein superfamily. Type 1 family.</text>
</comment>
<reference key="1">
    <citation type="submission" date="1996-04" db="EMBL/GenBank/DDBJ databases">
        <title>The use of metallothionein genes for determining the phylogenetic and evolutionary relationship between extant teleosts.</title>
        <authorList>
            <person name="Kille P."/>
            <person name="Olsson P.-E."/>
        </authorList>
    </citation>
    <scope>NUCLEOTIDE SEQUENCE [MRNA]</scope>
    <source>
        <tissue>Liver</tissue>
    </source>
</reference>
<accession>Q92044</accession>
<proteinExistence type="inferred from homology"/>
<sequence length="60" mass="6095">MDPCECSKTGKCNCGTSCTCTNCSCKCCKKSCCSCCPSGCSKCASGCVCKGNSCDKSCCQ</sequence>
<dbReference type="EMBL" id="X97273">
    <property type="protein sequence ID" value="CAA65928.1"/>
    <property type="molecule type" value="mRNA"/>
</dbReference>
<dbReference type="SMR" id="Q92044"/>
<dbReference type="GO" id="GO:0046872">
    <property type="term" value="F:metal ion binding"/>
    <property type="evidence" value="ECO:0007669"/>
    <property type="project" value="UniProtKB-KW"/>
</dbReference>
<dbReference type="FunFam" id="4.10.10.10:FF:000001">
    <property type="entry name" value="Metallothionein"/>
    <property type="match status" value="1"/>
</dbReference>
<dbReference type="Gene3D" id="4.10.10.10">
    <property type="entry name" value="Metallothionein Isoform II"/>
    <property type="match status" value="1"/>
</dbReference>
<dbReference type="InterPro" id="IPR017854">
    <property type="entry name" value="Metalthion_dom_sf"/>
</dbReference>
<dbReference type="InterPro" id="IPR023587">
    <property type="entry name" value="Metalthion_dom_sf_vert"/>
</dbReference>
<dbReference type="InterPro" id="IPR000006">
    <property type="entry name" value="Metalthion_vert"/>
</dbReference>
<dbReference type="InterPro" id="IPR018064">
    <property type="entry name" value="Metalthion_vert_metal_BS"/>
</dbReference>
<dbReference type="PANTHER" id="PTHR23299">
    <property type="entry name" value="METALLOTHIONEIN"/>
    <property type="match status" value="1"/>
</dbReference>
<dbReference type="PANTHER" id="PTHR23299:SF24">
    <property type="entry name" value="METALLOTHIONEIN-1X"/>
    <property type="match status" value="1"/>
</dbReference>
<dbReference type="Pfam" id="PF00131">
    <property type="entry name" value="Metallothio"/>
    <property type="match status" value="1"/>
</dbReference>
<dbReference type="PRINTS" id="PR00860">
    <property type="entry name" value="MTVERTEBRATE"/>
</dbReference>
<dbReference type="SUPFAM" id="SSF57868">
    <property type="entry name" value="Metallothionein"/>
    <property type="match status" value="1"/>
</dbReference>
<dbReference type="PROSITE" id="PS00203">
    <property type="entry name" value="METALLOTHIONEIN_VRT"/>
    <property type="match status" value="1"/>
</dbReference>
<gene>
    <name type="primary">mta</name>
</gene>